<comment type="function">
    <text evidence="1">F(1)F(0) ATP synthase produces ATP from ADP in the presence of a proton or sodium gradient. F-type ATPases consist of two structural domains, F(1) containing the extramembraneous catalytic core and F(0) containing the membrane proton channel, linked together by a central stalk and a peripheral stalk. During catalysis, ATP synthesis in the catalytic domain of F(1) is coupled via a rotary mechanism of the central stalk subunits to proton translocation.</text>
</comment>
<comment type="function">
    <text evidence="1">Component of the F(0) channel, it forms part of the peripheral stalk, linking F(1) to F(0).</text>
</comment>
<comment type="subunit">
    <text evidence="1">F-type ATPases have 2 components, F(1) - the catalytic core - and F(0) - the membrane proton channel. F(1) has five subunits: alpha(3), beta(3), gamma(1), delta(1), epsilon(1). F(0) has three main subunits: a(1), b(2) and c(10-14). The alpha and beta chains form an alternating ring which encloses part of the gamma chain. F(1) is attached to F(0) by a central stalk formed by the gamma and epsilon chains, while a peripheral stalk is formed by the delta and b chains.</text>
</comment>
<comment type="subcellular location">
    <subcellularLocation>
        <location evidence="1">Cell membrane</location>
        <topology evidence="1">Single-pass membrane protein</topology>
    </subcellularLocation>
</comment>
<comment type="similarity">
    <text evidence="1">Belongs to the ATPase B chain family.</text>
</comment>
<organism>
    <name type="scientific">Streptococcus pyogenes serotype M1</name>
    <dbReference type="NCBI Taxonomy" id="301447"/>
    <lineage>
        <taxon>Bacteria</taxon>
        <taxon>Bacillati</taxon>
        <taxon>Bacillota</taxon>
        <taxon>Bacilli</taxon>
        <taxon>Lactobacillales</taxon>
        <taxon>Streptococcaceae</taxon>
        <taxon>Streptococcus</taxon>
    </lineage>
</organism>
<keyword id="KW-0066">ATP synthesis</keyword>
<keyword id="KW-1003">Cell membrane</keyword>
<keyword id="KW-0138">CF(0)</keyword>
<keyword id="KW-0375">Hydrogen ion transport</keyword>
<keyword id="KW-0406">Ion transport</keyword>
<keyword id="KW-0472">Membrane</keyword>
<keyword id="KW-1185">Reference proteome</keyword>
<keyword id="KW-0812">Transmembrane</keyword>
<keyword id="KW-1133">Transmembrane helix</keyword>
<keyword id="KW-0813">Transport</keyword>
<reference key="1">
    <citation type="journal article" date="2001" name="Proc. Natl. Acad. Sci. U.S.A.">
        <title>Complete genome sequence of an M1 strain of Streptococcus pyogenes.</title>
        <authorList>
            <person name="Ferretti J.J."/>
            <person name="McShan W.M."/>
            <person name="Ajdic D.J."/>
            <person name="Savic D.J."/>
            <person name="Savic G."/>
            <person name="Lyon K."/>
            <person name="Primeaux C."/>
            <person name="Sezate S."/>
            <person name="Suvorov A.N."/>
            <person name="Kenton S."/>
            <person name="Lai H.S."/>
            <person name="Lin S.P."/>
            <person name="Qian Y."/>
            <person name="Jia H.G."/>
            <person name="Najar F.Z."/>
            <person name="Ren Q."/>
            <person name="Zhu H."/>
            <person name="Song L."/>
            <person name="White J."/>
            <person name="Yuan X."/>
            <person name="Clifton S.W."/>
            <person name="Roe B.A."/>
            <person name="McLaughlin R.E."/>
        </authorList>
    </citation>
    <scope>NUCLEOTIDE SEQUENCE [LARGE SCALE GENOMIC DNA]</scope>
    <source>
        <strain>ATCC 700294 / SF370 / Serotype M1</strain>
    </source>
</reference>
<reference key="2">
    <citation type="journal article" date="2005" name="J. Infect. Dis.">
        <title>Evolutionary origin and emergence of a highly successful clone of serotype M1 group A Streptococcus involved multiple horizontal gene transfer events.</title>
        <authorList>
            <person name="Sumby P."/>
            <person name="Porcella S.F."/>
            <person name="Madrigal A.G."/>
            <person name="Barbian K.D."/>
            <person name="Virtaneva K."/>
            <person name="Ricklefs S.M."/>
            <person name="Sturdevant D.E."/>
            <person name="Graham M.R."/>
            <person name="Vuopio-Varkila J."/>
            <person name="Hoe N.P."/>
            <person name="Musser J.M."/>
        </authorList>
    </citation>
    <scope>NUCLEOTIDE SEQUENCE [LARGE SCALE GENOMIC DNA]</scope>
    <source>
        <strain>ATCC BAA-947 / MGAS5005 / Serotype M1</strain>
    </source>
</reference>
<evidence type="ECO:0000255" key="1">
    <source>
        <dbReference type="HAMAP-Rule" id="MF_01398"/>
    </source>
</evidence>
<name>ATPF_STRP1</name>
<protein>
    <recommendedName>
        <fullName evidence="1">ATP synthase subunit b</fullName>
    </recommendedName>
    <alternativeName>
        <fullName evidence="1">ATP synthase F(0) sector subunit b</fullName>
    </alternativeName>
    <alternativeName>
        <fullName evidence="1">ATPase subunit I</fullName>
    </alternativeName>
    <alternativeName>
        <fullName evidence="1">F-type ATPase subunit b</fullName>
        <shortName evidence="1">F-ATPase subunit b</shortName>
    </alternativeName>
</protein>
<sequence length="164" mass="17808">MSITFGELVGNFILVTGSVIVLLLLIKKFAWGAIESILQTRSQQISRDIDQAEQSRLSAQQLEAKSQANLDASRLQASKIISDAKEIGQLQGDKLVAEATDEAKRLKEKALTDIEQSKSDAISAVKTEMSDLTVLLAEKIMGANLDKTAQSQLIDSYLDDLGEA</sequence>
<gene>
    <name evidence="1" type="primary">atpF</name>
    <name type="ordered locus">SPy_0756</name>
    <name type="ordered locus">M5005_Spy0577</name>
</gene>
<dbReference type="EMBL" id="AE004092">
    <property type="protein sequence ID" value="AAK33699.1"/>
    <property type="molecule type" value="Genomic_DNA"/>
</dbReference>
<dbReference type="EMBL" id="CP000017">
    <property type="protein sequence ID" value="AAZ51195.1"/>
    <property type="molecule type" value="Genomic_DNA"/>
</dbReference>
<dbReference type="RefSeq" id="NP_268978.1">
    <property type="nucleotide sequence ID" value="NC_002737.2"/>
</dbReference>
<dbReference type="SMR" id="Q9A0J1"/>
<dbReference type="PaxDb" id="1314-HKU360_00587"/>
<dbReference type="KEGG" id="spy:SPy_0756"/>
<dbReference type="KEGG" id="spz:M5005_Spy0577"/>
<dbReference type="PATRIC" id="fig|160490.10.peg.644"/>
<dbReference type="HOGENOM" id="CLU_079215_4_2_9"/>
<dbReference type="OMA" id="ILAWFTM"/>
<dbReference type="Proteomes" id="UP000000750">
    <property type="component" value="Chromosome"/>
</dbReference>
<dbReference type="GO" id="GO:0005886">
    <property type="term" value="C:plasma membrane"/>
    <property type="evidence" value="ECO:0007669"/>
    <property type="project" value="UniProtKB-SubCell"/>
</dbReference>
<dbReference type="GO" id="GO:0045259">
    <property type="term" value="C:proton-transporting ATP synthase complex"/>
    <property type="evidence" value="ECO:0007669"/>
    <property type="project" value="UniProtKB-KW"/>
</dbReference>
<dbReference type="GO" id="GO:0046933">
    <property type="term" value="F:proton-transporting ATP synthase activity, rotational mechanism"/>
    <property type="evidence" value="ECO:0007669"/>
    <property type="project" value="UniProtKB-UniRule"/>
</dbReference>
<dbReference type="GO" id="GO:0046961">
    <property type="term" value="F:proton-transporting ATPase activity, rotational mechanism"/>
    <property type="evidence" value="ECO:0007669"/>
    <property type="project" value="TreeGrafter"/>
</dbReference>
<dbReference type="CDD" id="cd06503">
    <property type="entry name" value="ATP-synt_Fo_b"/>
    <property type="match status" value="1"/>
</dbReference>
<dbReference type="HAMAP" id="MF_01398">
    <property type="entry name" value="ATP_synth_b_bprime"/>
    <property type="match status" value="1"/>
</dbReference>
<dbReference type="InterPro" id="IPR028987">
    <property type="entry name" value="ATP_synth_B-like_membr_sf"/>
</dbReference>
<dbReference type="InterPro" id="IPR002146">
    <property type="entry name" value="ATP_synth_b/b'su_bac/chlpt"/>
</dbReference>
<dbReference type="InterPro" id="IPR005864">
    <property type="entry name" value="ATP_synth_F0_bsu_bac"/>
</dbReference>
<dbReference type="InterPro" id="IPR050059">
    <property type="entry name" value="ATP_synthase_B_chain"/>
</dbReference>
<dbReference type="NCBIfam" id="TIGR01144">
    <property type="entry name" value="ATP_synt_b"/>
    <property type="match status" value="1"/>
</dbReference>
<dbReference type="PANTHER" id="PTHR33445:SF1">
    <property type="entry name" value="ATP SYNTHASE SUBUNIT B"/>
    <property type="match status" value="1"/>
</dbReference>
<dbReference type="PANTHER" id="PTHR33445">
    <property type="entry name" value="ATP SYNTHASE SUBUNIT B', CHLOROPLASTIC"/>
    <property type="match status" value="1"/>
</dbReference>
<dbReference type="Pfam" id="PF00430">
    <property type="entry name" value="ATP-synt_B"/>
    <property type="match status" value="1"/>
</dbReference>
<dbReference type="SUPFAM" id="SSF81573">
    <property type="entry name" value="F1F0 ATP synthase subunit B, membrane domain"/>
    <property type="match status" value="1"/>
</dbReference>
<accession>Q9A0J1</accession>
<accession>Q48ZM3</accession>
<feature type="chain" id="PRO_0000368801" description="ATP synthase subunit b">
    <location>
        <begin position="1"/>
        <end position="164"/>
    </location>
</feature>
<feature type="transmembrane region" description="Helical" evidence="1">
    <location>
        <begin position="6"/>
        <end position="26"/>
    </location>
</feature>
<proteinExistence type="inferred from homology"/>